<feature type="chain" id="PRO_0000284951" description="Putative transcription factor Ovo-like 1">
    <location>
        <begin position="1"/>
        <end position="267"/>
    </location>
</feature>
<feature type="zinc finger region" description="C2H2-type 1" evidence="2">
    <location>
        <begin position="118"/>
        <end position="140"/>
    </location>
</feature>
<feature type="zinc finger region" description="C2H2-type 2" evidence="2">
    <location>
        <begin position="146"/>
        <end position="168"/>
    </location>
</feature>
<feature type="zinc finger region" description="C2H2-type 3" evidence="2">
    <location>
        <begin position="174"/>
        <end position="197"/>
    </location>
</feature>
<feature type="zinc finger region" description="C2H2-type 4" evidence="2">
    <location>
        <begin position="213"/>
        <end position="235"/>
    </location>
</feature>
<dbReference type="EMBL" id="BC133390">
    <property type="protein sequence ID" value="AAI33391.1"/>
    <property type="molecule type" value="mRNA"/>
</dbReference>
<dbReference type="RefSeq" id="NP_001074990.1">
    <property type="nucleotide sequence ID" value="NM_001081521.1"/>
</dbReference>
<dbReference type="SMR" id="A2VDT4"/>
<dbReference type="FunCoup" id="A2VDT4">
    <property type="interactions" value="65"/>
</dbReference>
<dbReference type="STRING" id="9913.ENSBTAP00000016791"/>
<dbReference type="PaxDb" id="9913-ENSBTAP00000016791"/>
<dbReference type="Ensembl" id="ENSBTAT00000016791.5">
    <property type="protein sequence ID" value="ENSBTAP00000016791.4"/>
    <property type="gene ID" value="ENSBTAG00000012656.6"/>
</dbReference>
<dbReference type="GeneID" id="513727"/>
<dbReference type="KEGG" id="bta:513727"/>
<dbReference type="CTD" id="5017"/>
<dbReference type="VEuPathDB" id="HostDB:ENSBTAG00000012656"/>
<dbReference type="VGNC" id="VGNC:32505">
    <property type="gene designation" value="OVOL1"/>
</dbReference>
<dbReference type="eggNOG" id="KOG3576">
    <property type="taxonomic scope" value="Eukaryota"/>
</dbReference>
<dbReference type="GeneTree" id="ENSGT00940000161363"/>
<dbReference type="HOGENOM" id="CLU_087964_0_0_1"/>
<dbReference type="InParanoid" id="A2VDT4"/>
<dbReference type="OMA" id="ECGCTSD"/>
<dbReference type="OrthoDB" id="6508643at2759"/>
<dbReference type="TreeFam" id="TF337552"/>
<dbReference type="Proteomes" id="UP000009136">
    <property type="component" value="Chromosome 29"/>
</dbReference>
<dbReference type="Bgee" id="ENSBTAG00000012656">
    <property type="expression patterns" value="Expressed in surface of tongue and 75 other cell types or tissues"/>
</dbReference>
<dbReference type="GO" id="GO:0005634">
    <property type="term" value="C:nucleus"/>
    <property type="evidence" value="ECO:0000318"/>
    <property type="project" value="GO_Central"/>
</dbReference>
<dbReference type="GO" id="GO:0000981">
    <property type="term" value="F:DNA-binding transcription factor activity, RNA polymerase II-specific"/>
    <property type="evidence" value="ECO:0000318"/>
    <property type="project" value="GO_Central"/>
</dbReference>
<dbReference type="GO" id="GO:0000978">
    <property type="term" value="F:RNA polymerase II cis-regulatory region sequence-specific DNA binding"/>
    <property type="evidence" value="ECO:0000318"/>
    <property type="project" value="GO_Central"/>
</dbReference>
<dbReference type="GO" id="GO:0008270">
    <property type="term" value="F:zinc ion binding"/>
    <property type="evidence" value="ECO:0007669"/>
    <property type="project" value="UniProtKB-KW"/>
</dbReference>
<dbReference type="GO" id="GO:0009913">
    <property type="term" value="P:epidermal cell differentiation"/>
    <property type="evidence" value="ECO:0000318"/>
    <property type="project" value="GO_Central"/>
</dbReference>
<dbReference type="GO" id="GO:0006357">
    <property type="term" value="P:regulation of transcription by RNA polymerase II"/>
    <property type="evidence" value="ECO:0000318"/>
    <property type="project" value="GO_Central"/>
</dbReference>
<dbReference type="FunFam" id="3.30.160.60:FF:001921">
    <property type="entry name" value="Putative transcription factor Ovo-like 1"/>
    <property type="match status" value="1"/>
</dbReference>
<dbReference type="FunFam" id="3.30.160.60:FF:001221">
    <property type="entry name" value="putative transcription factor Ovo-like 1"/>
    <property type="match status" value="1"/>
</dbReference>
<dbReference type="FunFam" id="3.30.160.60:FF:001250">
    <property type="entry name" value="putative transcription factor ovo-like protein 3"/>
    <property type="match status" value="1"/>
</dbReference>
<dbReference type="Gene3D" id="3.30.160.60">
    <property type="entry name" value="Classic Zinc Finger"/>
    <property type="match status" value="3"/>
</dbReference>
<dbReference type="InterPro" id="IPR027756">
    <property type="entry name" value="Ovo-like"/>
</dbReference>
<dbReference type="InterPro" id="IPR036236">
    <property type="entry name" value="Znf_C2H2_sf"/>
</dbReference>
<dbReference type="InterPro" id="IPR013087">
    <property type="entry name" value="Znf_C2H2_type"/>
</dbReference>
<dbReference type="PANTHER" id="PTHR10032:SF217">
    <property type="entry name" value="TRANSCRIPTION FACTOR OVO-LIKE 1-RELATED"/>
    <property type="match status" value="1"/>
</dbReference>
<dbReference type="PANTHER" id="PTHR10032">
    <property type="entry name" value="ZINC FINGER PROTEIN WITH KRAB AND SCAN DOMAINS"/>
    <property type="match status" value="1"/>
</dbReference>
<dbReference type="Pfam" id="PF00096">
    <property type="entry name" value="zf-C2H2"/>
    <property type="match status" value="1"/>
</dbReference>
<dbReference type="Pfam" id="PF13465">
    <property type="entry name" value="zf-H2C2_2"/>
    <property type="match status" value="1"/>
</dbReference>
<dbReference type="SMART" id="SM00355">
    <property type="entry name" value="ZnF_C2H2"/>
    <property type="match status" value="4"/>
</dbReference>
<dbReference type="SUPFAM" id="SSF57667">
    <property type="entry name" value="beta-beta-alpha zinc fingers"/>
    <property type="match status" value="2"/>
</dbReference>
<dbReference type="PROSITE" id="PS00028">
    <property type="entry name" value="ZINC_FINGER_C2H2_1"/>
    <property type="match status" value="3"/>
</dbReference>
<dbReference type="PROSITE" id="PS50157">
    <property type="entry name" value="ZINC_FINGER_C2H2_2"/>
    <property type="match status" value="4"/>
</dbReference>
<proteinExistence type="evidence at transcript level"/>
<name>OVOL1_BOVIN</name>
<sequence>MPRAFLVKKPCVSTCKRNWSELPDEERGEIYVPVSLGFCPPQPYQEPEPSVAEPPSCPLALDMSLRNSSYSVTPGPCVVAQLPSEDMSRLAGPQSRDHGFLRTKMKVTLGDGPSGDLFTCHICQKAFTYQRMLNRHMKCHNDVKRHLCTYCGKGFNDTFDLKRHVRTHTGVRPYKCSLCDKAFTQRCSLESHLKKIHGVQQKYAYKERRAKLYVCEECGCTSESQEGHVLHLKEHHPDSPLLRKTSKKVAVALQNTVTSLLQGAHHV</sequence>
<comment type="function">
    <text evidence="1">Putative transcription factor. Involved in hair formation and spermatogenesis. May function in the differentiation and/or maintenance of the urogenital system (By similarity).</text>
</comment>
<comment type="subcellular location">
    <subcellularLocation>
        <location evidence="1">Nucleus</location>
    </subcellularLocation>
</comment>
<protein>
    <recommendedName>
        <fullName>Putative transcription factor Ovo-like 1</fullName>
    </recommendedName>
</protein>
<accession>A2VDT4</accession>
<reference key="1">
    <citation type="submission" date="2007-02" db="EMBL/GenBank/DDBJ databases">
        <authorList>
            <consortium name="NIH - Mammalian Gene Collection (MGC) project"/>
        </authorList>
    </citation>
    <scope>NUCLEOTIDE SEQUENCE [LARGE SCALE MRNA]</scope>
    <source>
        <strain>Hereford</strain>
        <tissue>Fetal skin</tissue>
    </source>
</reference>
<evidence type="ECO:0000250" key="1"/>
<evidence type="ECO:0000255" key="2">
    <source>
        <dbReference type="PROSITE-ProRule" id="PRU00042"/>
    </source>
</evidence>
<organism>
    <name type="scientific">Bos taurus</name>
    <name type="common">Bovine</name>
    <dbReference type="NCBI Taxonomy" id="9913"/>
    <lineage>
        <taxon>Eukaryota</taxon>
        <taxon>Metazoa</taxon>
        <taxon>Chordata</taxon>
        <taxon>Craniata</taxon>
        <taxon>Vertebrata</taxon>
        <taxon>Euteleostomi</taxon>
        <taxon>Mammalia</taxon>
        <taxon>Eutheria</taxon>
        <taxon>Laurasiatheria</taxon>
        <taxon>Artiodactyla</taxon>
        <taxon>Ruminantia</taxon>
        <taxon>Pecora</taxon>
        <taxon>Bovidae</taxon>
        <taxon>Bovinae</taxon>
        <taxon>Bos</taxon>
    </lineage>
</organism>
<keyword id="KW-0238">DNA-binding</keyword>
<keyword id="KW-0479">Metal-binding</keyword>
<keyword id="KW-0539">Nucleus</keyword>
<keyword id="KW-1185">Reference proteome</keyword>
<keyword id="KW-0677">Repeat</keyword>
<keyword id="KW-0804">Transcription</keyword>
<keyword id="KW-0805">Transcription regulation</keyword>
<keyword id="KW-0862">Zinc</keyword>
<keyword id="KW-0863">Zinc-finger</keyword>
<gene>
    <name type="primary">OVOL1</name>
</gene>